<accession>Q16890</accession>
<accession>A8K757</accession>
<accession>A8K772</accession>
<accession>A8MUD2</accession>
<accession>A8MUJ7</accession>
<accession>A8MW70</accession>
<accession>F6V707</accession>
<accession>O43397</accession>
<accession>Q5TC99</accession>
<accession>Q5TDQ0</accession>
<accession>Q9BUQ6</accession>
<accession>Q9C054</accession>
<keyword id="KW-0025">Alternative splicing</keyword>
<keyword id="KW-0175">Coiled coil</keyword>
<keyword id="KW-0488">Methylation</keyword>
<keyword id="KW-0597">Phosphoprotein</keyword>
<keyword id="KW-1267">Proteomics identification</keyword>
<keyword id="KW-1185">Reference proteome</keyword>
<proteinExistence type="evidence at protein level"/>
<feature type="chain" id="PRO_0000185741" description="Tumor protein D53">
    <location>
        <begin position="1"/>
        <end position="204"/>
    </location>
</feature>
<feature type="region of interest" description="Disordered" evidence="2">
    <location>
        <begin position="1"/>
        <end position="20"/>
    </location>
</feature>
<feature type="coiled-coil region" evidence="1">
    <location>
        <begin position="22"/>
        <end position="73"/>
    </location>
</feature>
<feature type="modified residue" description="Phosphoserine" evidence="12">
    <location>
        <position position="29"/>
    </location>
</feature>
<feature type="modified residue" description="Phosphoserine" evidence="10">
    <location>
        <position position="86"/>
    </location>
</feature>
<feature type="modified residue" description="Phosphoserine" evidence="10">
    <location>
        <position position="122"/>
    </location>
</feature>
<feature type="modified residue" description="Phosphoserine" evidence="10">
    <location>
        <position position="131"/>
    </location>
</feature>
<feature type="modified residue" description="Omega-N-methylarginine" evidence="11">
    <location>
        <position position="133"/>
    </location>
</feature>
<feature type="modified residue" description="Phosphothreonine" evidence="12">
    <location>
        <position position="146"/>
    </location>
</feature>
<feature type="modified residue" description="Phosphoserine" evidence="8 9 10">
    <location>
        <position position="149"/>
    </location>
</feature>
<feature type="modified residue" description="Phosphoserine" evidence="10">
    <location>
        <position position="174"/>
    </location>
</feature>
<feature type="splice variant" id="VSP_036751" description="In isoform 4 and isoform 5." evidence="5">
    <location>
        <begin position="1"/>
        <end position="29"/>
    </location>
</feature>
<feature type="splice variant" id="VSP_036752" description="In isoform 3 and isoform 4." evidence="3 5 6">
    <original>SYS</original>
    <variation>RRK</variation>
    <location>
        <begin position="129"/>
        <end position="131"/>
    </location>
</feature>
<feature type="splice variant" id="VSP_036753" description="In isoform 3 and isoform 4." evidence="3 5 6">
    <location>
        <begin position="132"/>
        <end position="204"/>
    </location>
</feature>
<feature type="splice variant" id="VSP_036754" description="In isoform 2." evidence="4">
    <original>NS</original>
    <variation>RK</variation>
    <location>
        <begin position="143"/>
        <end position="144"/>
    </location>
</feature>
<feature type="splice variant" id="VSP_036755" description="In isoform 2." evidence="4">
    <location>
        <begin position="145"/>
        <end position="204"/>
    </location>
</feature>
<feature type="sequence variant" id="VAR_034568" description="In dbSNP:rs6905231.">
    <original>R</original>
    <variation>K</variation>
    <location>
        <position position="62"/>
    </location>
</feature>
<feature type="sequence conflict" description="In Ref. 4; BAF84576." evidence="7" ref="4">
    <original>N</original>
    <variation>T</variation>
    <location>
        <position position="74"/>
    </location>
</feature>
<feature type="sequence conflict" description="In Ref. 4; BAF84561." evidence="7" ref="4">
    <original>G</original>
    <variation>E</variation>
    <location>
        <position position="107"/>
    </location>
</feature>
<reference key="1">
    <citation type="journal article" date="1996" name="Genomics">
        <title>Definition of the tumor protein D52 (TPD52) gene family through cloning of D52 homologues in human (hD53) and mouse (mD52).</title>
        <authorList>
            <person name="Byrne J.A."/>
            <person name="Mattei M.-G."/>
            <person name="Basset P."/>
        </authorList>
    </citation>
    <scope>NUCLEOTIDE SEQUENCE [MRNA] (ISOFORM 1)</scope>
    <source>
        <tissue>Mammary carcinoma</tissue>
    </source>
</reference>
<reference key="2">
    <citation type="journal article" date="1998" name="Oncogene">
        <title>Identification of homo- and heteromeric interactions between members of the breast carcinoma-associated D52 protein family using the yeast two-hybrid system.</title>
        <authorList>
            <person name="Byrne J.A."/>
            <person name="Nourse C.R."/>
            <person name="Basset P."/>
            <person name="Gunning P."/>
        </authorList>
    </citation>
    <scope>NUCLEOTIDE SEQUENCE [MRNA] (ISOFORM 4)</scope>
    <scope>SELF-ASSOCIATION</scope>
    <scope>INTERACTION WITH TPD52 AND TPD52L2</scope>
</reference>
<reference key="3">
    <citation type="submission" date="1999-11" db="EMBL/GenBank/DDBJ databases">
        <authorList>
            <person name="Cho S."/>
            <person name="Kim J."/>
            <person name="Ryu S.E."/>
        </authorList>
    </citation>
    <scope>NUCLEOTIDE SEQUENCE [MRNA] (ISOFORM 3)</scope>
</reference>
<reference key="4">
    <citation type="journal article" date="2004" name="Nat. Genet.">
        <title>Complete sequencing and characterization of 21,243 full-length human cDNAs.</title>
        <authorList>
            <person name="Ota T."/>
            <person name="Suzuki Y."/>
            <person name="Nishikawa T."/>
            <person name="Otsuki T."/>
            <person name="Sugiyama T."/>
            <person name="Irie R."/>
            <person name="Wakamatsu A."/>
            <person name="Hayashi K."/>
            <person name="Sato H."/>
            <person name="Nagai K."/>
            <person name="Kimura K."/>
            <person name="Makita H."/>
            <person name="Sekine M."/>
            <person name="Obayashi M."/>
            <person name="Nishi T."/>
            <person name="Shibahara T."/>
            <person name="Tanaka T."/>
            <person name="Ishii S."/>
            <person name="Yamamoto J."/>
            <person name="Saito K."/>
            <person name="Kawai Y."/>
            <person name="Isono Y."/>
            <person name="Nakamura Y."/>
            <person name="Nagahari K."/>
            <person name="Murakami K."/>
            <person name="Yasuda T."/>
            <person name="Iwayanagi T."/>
            <person name="Wagatsuma M."/>
            <person name="Shiratori A."/>
            <person name="Sudo H."/>
            <person name="Hosoiri T."/>
            <person name="Kaku Y."/>
            <person name="Kodaira H."/>
            <person name="Kondo H."/>
            <person name="Sugawara M."/>
            <person name="Takahashi M."/>
            <person name="Kanda K."/>
            <person name="Yokoi T."/>
            <person name="Furuya T."/>
            <person name="Kikkawa E."/>
            <person name="Omura Y."/>
            <person name="Abe K."/>
            <person name="Kamihara K."/>
            <person name="Katsuta N."/>
            <person name="Sato K."/>
            <person name="Tanikawa M."/>
            <person name="Yamazaki M."/>
            <person name="Ninomiya K."/>
            <person name="Ishibashi T."/>
            <person name="Yamashita H."/>
            <person name="Murakawa K."/>
            <person name="Fujimori K."/>
            <person name="Tanai H."/>
            <person name="Kimata M."/>
            <person name="Watanabe M."/>
            <person name="Hiraoka S."/>
            <person name="Chiba Y."/>
            <person name="Ishida S."/>
            <person name="Ono Y."/>
            <person name="Takiguchi S."/>
            <person name="Watanabe S."/>
            <person name="Yosida M."/>
            <person name="Hotuta T."/>
            <person name="Kusano J."/>
            <person name="Kanehori K."/>
            <person name="Takahashi-Fujii A."/>
            <person name="Hara H."/>
            <person name="Tanase T.-O."/>
            <person name="Nomura Y."/>
            <person name="Togiya S."/>
            <person name="Komai F."/>
            <person name="Hara R."/>
            <person name="Takeuchi K."/>
            <person name="Arita M."/>
            <person name="Imose N."/>
            <person name="Musashino K."/>
            <person name="Yuuki H."/>
            <person name="Oshima A."/>
            <person name="Sasaki N."/>
            <person name="Aotsuka S."/>
            <person name="Yoshikawa Y."/>
            <person name="Matsunawa H."/>
            <person name="Ichihara T."/>
            <person name="Shiohata N."/>
            <person name="Sano S."/>
            <person name="Moriya S."/>
            <person name="Momiyama H."/>
            <person name="Satoh N."/>
            <person name="Takami S."/>
            <person name="Terashima Y."/>
            <person name="Suzuki O."/>
            <person name="Nakagawa S."/>
            <person name="Senoh A."/>
            <person name="Mizoguchi H."/>
            <person name="Goto Y."/>
            <person name="Shimizu F."/>
            <person name="Wakebe H."/>
            <person name="Hishigaki H."/>
            <person name="Watanabe T."/>
            <person name="Sugiyama A."/>
            <person name="Takemoto M."/>
            <person name="Kawakami B."/>
            <person name="Yamazaki M."/>
            <person name="Watanabe K."/>
            <person name="Kumagai A."/>
            <person name="Itakura S."/>
            <person name="Fukuzumi Y."/>
            <person name="Fujimori Y."/>
            <person name="Komiyama M."/>
            <person name="Tashiro H."/>
            <person name="Tanigami A."/>
            <person name="Fujiwara T."/>
            <person name="Ono T."/>
            <person name="Yamada K."/>
            <person name="Fujii Y."/>
            <person name="Ozaki K."/>
            <person name="Hirao M."/>
            <person name="Ohmori Y."/>
            <person name="Kawabata A."/>
            <person name="Hikiji T."/>
            <person name="Kobatake N."/>
            <person name="Inagaki H."/>
            <person name="Ikema Y."/>
            <person name="Okamoto S."/>
            <person name="Okitani R."/>
            <person name="Kawakami T."/>
            <person name="Noguchi S."/>
            <person name="Itoh T."/>
            <person name="Shigeta K."/>
            <person name="Senba T."/>
            <person name="Matsumura K."/>
            <person name="Nakajima Y."/>
            <person name="Mizuno T."/>
            <person name="Morinaga M."/>
            <person name="Sasaki M."/>
            <person name="Togashi T."/>
            <person name="Oyama M."/>
            <person name="Hata H."/>
            <person name="Watanabe M."/>
            <person name="Komatsu T."/>
            <person name="Mizushima-Sugano J."/>
            <person name="Satoh T."/>
            <person name="Shirai Y."/>
            <person name="Takahashi Y."/>
            <person name="Nakagawa K."/>
            <person name="Okumura K."/>
            <person name="Nagase T."/>
            <person name="Nomura N."/>
            <person name="Kikuchi H."/>
            <person name="Masuho Y."/>
            <person name="Yamashita R."/>
            <person name="Nakai K."/>
            <person name="Yada T."/>
            <person name="Nakamura Y."/>
            <person name="Ohara O."/>
            <person name="Isogai T."/>
            <person name="Sugano S."/>
        </authorList>
    </citation>
    <scope>NUCLEOTIDE SEQUENCE [LARGE SCALE MRNA] (ISOFORMS 1 AND 3)</scope>
    <source>
        <tissue>Skeletal muscle</tissue>
    </source>
</reference>
<reference key="5">
    <citation type="journal article" date="2003" name="Nature">
        <title>The DNA sequence and analysis of human chromosome 6.</title>
        <authorList>
            <person name="Mungall A.J."/>
            <person name="Palmer S.A."/>
            <person name="Sims S.K."/>
            <person name="Edwards C.A."/>
            <person name="Ashurst J.L."/>
            <person name="Wilming L."/>
            <person name="Jones M.C."/>
            <person name="Horton R."/>
            <person name="Hunt S.E."/>
            <person name="Scott C.E."/>
            <person name="Gilbert J.G.R."/>
            <person name="Clamp M.E."/>
            <person name="Bethel G."/>
            <person name="Milne S."/>
            <person name="Ainscough R."/>
            <person name="Almeida J.P."/>
            <person name="Ambrose K.D."/>
            <person name="Andrews T.D."/>
            <person name="Ashwell R.I.S."/>
            <person name="Babbage A.K."/>
            <person name="Bagguley C.L."/>
            <person name="Bailey J."/>
            <person name="Banerjee R."/>
            <person name="Barker D.J."/>
            <person name="Barlow K.F."/>
            <person name="Bates K."/>
            <person name="Beare D.M."/>
            <person name="Beasley H."/>
            <person name="Beasley O."/>
            <person name="Bird C.P."/>
            <person name="Blakey S.E."/>
            <person name="Bray-Allen S."/>
            <person name="Brook J."/>
            <person name="Brown A.J."/>
            <person name="Brown J.Y."/>
            <person name="Burford D.C."/>
            <person name="Burrill W."/>
            <person name="Burton J."/>
            <person name="Carder C."/>
            <person name="Carter N.P."/>
            <person name="Chapman J.C."/>
            <person name="Clark S.Y."/>
            <person name="Clark G."/>
            <person name="Clee C.M."/>
            <person name="Clegg S."/>
            <person name="Cobley V."/>
            <person name="Collier R.E."/>
            <person name="Collins J.E."/>
            <person name="Colman L.K."/>
            <person name="Corby N.R."/>
            <person name="Coville G.J."/>
            <person name="Culley K.M."/>
            <person name="Dhami P."/>
            <person name="Davies J."/>
            <person name="Dunn M."/>
            <person name="Earthrowl M.E."/>
            <person name="Ellington A.E."/>
            <person name="Evans K.A."/>
            <person name="Faulkner L."/>
            <person name="Francis M.D."/>
            <person name="Frankish A."/>
            <person name="Frankland J."/>
            <person name="French L."/>
            <person name="Garner P."/>
            <person name="Garnett J."/>
            <person name="Ghori M.J."/>
            <person name="Gilby L.M."/>
            <person name="Gillson C.J."/>
            <person name="Glithero R.J."/>
            <person name="Grafham D.V."/>
            <person name="Grant M."/>
            <person name="Gribble S."/>
            <person name="Griffiths C."/>
            <person name="Griffiths M.N.D."/>
            <person name="Hall R."/>
            <person name="Halls K.S."/>
            <person name="Hammond S."/>
            <person name="Harley J.L."/>
            <person name="Hart E.A."/>
            <person name="Heath P.D."/>
            <person name="Heathcott R."/>
            <person name="Holmes S.J."/>
            <person name="Howden P.J."/>
            <person name="Howe K.L."/>
            <person name="Howell G.R."/>
            <person name="Huckle E."/>
            <person name="Humphray S.J."/>
            <person name="Humphries M.D."/>
            <person name="Hunt A.R."/>
            <person name="Johnson C.M."/>
            <person name="Joy A.A."/>
            <person name="Kay M."/>
            <person name="Keenan S.J."/>
            <person name="Kimberley A.M."/>
            <person name="King A."/>
            <person name="Laird G.K."/>
            <person name="Langford C."/>
            <person name="Lawlor S."/>
            <person name="Leongamornlert D.A."/>
            <person name="Leversha M."/>
            <person name="Lloyd C.R."/>
            <person name="Lloyd D.M."/>
            <person name="Loveland J.E."/>
            <person name="Lovell J."/>
            <person name="Martin S."/>
            <person name="Mashreghi-Mohammadi M."/>
            <person name="Maslen G.L."/>
            <person name="Matthews L."/>
            <person name="McCann O.T."/>
            <person name="McLaren S.J."/>
            <person name="McLay K."/>
            <person name="McMurray A."/>
            <person name="Moore M.J.F."/>
            <person name="Mullikin J.C."/>
            <person name="Niblett D."/>
            <person name="Nickerson T."/>
            <person name="Novik K.L."/>
            <person name="Oliver K."/>
            <person name="Overton-Larty E.K."/>
            <person name="Parker A."/>
            <person name="Patel R."/>
            <person name="Pearce A.V."/>
            <person name="Peck A.I."/>
            <person name="Phillimore B.J.C.T."/>
            <person name="Phillips S."/>
            <person name="Plumb R.W."/>
            <person name="Porter K.M."/>
            <person name="Ramsey Y."/>
            <person name="Ranby S.A."/>
            <person name="Rice C.M."/>
            <person name="Ross M.T."/>
            <person name="Searle S.M."/>
            <person name="Sehra H.K."/>
            <person name="Sheridan E."/>
            <person name="Skuce C.D."/>
            <person name="Smith S."/>
            <person name="Smith M."/>
            <person name="Spraggon L."/>
            <person name="Squares S.L."/>
            <person name="Steward C.A."/>
            <person name="Sycamore N."/>
            <person name="Tamlyn-Hall G."/>
            <person name="Tester J."/>
            <person name="Theaker A.J."/>
            <person name="Thomas D.W."/>
            <person name="Thorpe A."/>
            <person name="Tracey A."/>
            <person name="Tromans A."/>
            <person name="Tubby B."/>
            <person name="Wall M."/>
            <person name="Wallis J.M."/>
            <person name="West A.P."/>
            <person name="White S.S."/>
            <person name="Whitehead S.L."/>
            <person name="Whittaker H."/>
            <person name="Wild A."/>
            <person name="Willey D.J."/>
            <person name="Wilmer T.E."/>
            <person name="Wood J.M."/>
            <person name="Wray P.W."/>
            <person name="Wyatt J.C."/>
            <person name="Young L."/>
            <person name="Younger R.M."/>
            <person name="Bentley D.R."/>
            <person name="Coulson A."/>
            <person name="Durbin R.M."/>
            <person name="Hubbard T."/>
            <person name="Sulston J.E."/>
            <person name="Dunham I."/>
            <person name="Rogers J."/>
            <person name="Beck S."/>
        </authorList>
    </citation>
    <scope>NUCLEOTIDE SEQUENCE [LARGE SCALE GENOMIC DNA]</scope>
</reference>
<reference key="6">
    <citation type="submission" date="2005-09" db="EMBL/GenBank/DDBJ databases">
        <authorList>
            <person name="Mural R.J."/>
            <person name="Istrail S."/>
            <person name="Sutton G.G."/>
            <person name="Florea L."/>
            <person name="Halpern A.L."/>
            <person name="Mobarry C.M."/>
            <person name="Lippert R."/>
            <person name="Walenz B."/>
            <person name="Shatkay H."/>
            <person name="Dew I."/>
            <person name="Miller J.R."/>
            <person name="Flanigan M.J."/>
            <person name="Edwards N.J."/>
            <person name="Bolanos R."/>
            <person name="Fasulo D."/>
            <person name="Halldorsson B.V."/>
            <person name="Hannenhalli S."/>
            <person name="Turner R."/>
            <person name="Yooseph S."/>
            <person name="Lu F."/>
            <person name="Nusskern D.R."/>
            <person name="Shue B.C."/>
            <person name="Zheng X.H."/>
            <person name="Zhong F."/>
            <person name="Delcher A.L."/>
            <person name="Huson D.H."/>
            <person name="Kravitz S.A."/>
            <person name="Mouchard L."/>
            <person name="Reinert K."/>
            <person name="Remington K.A."/>
            <person name="Clark A.G."/>
            <person name="Waterman M.S."/>
            <person name="Eichler E.E."/>
            <person name="Adams M.D."/>
            <person name="Hunkapiller M.W."/>
            <person name="Myers E.W."/>
            <person name="Venter J.C."/>
        </authorList>
    </citation>
    <scope>NUCLEOTIDE SEQUENCE [LARGE SCALE GENOMIC DNA]</scope>
</reference>
<reference key="7">
    <citation type="journal article" date="2004" name="Genome Res.">
        <title>The status, quality, and expansion of the NIH full-length cDNA project: the Mammalian Gene Collection (MGC).</title>
        <authorList>
            <consortium name="The MGC Project Team"/>
        </authorList>
    </citation>
    <scope>NUCLEOTIDE SEQUENCE [LARGE SCALE MRNA] (ISOFORM 2)</scope>
    <source>
        <tissue>Lung</tissue>
    </source>
</reference>
<reference key="8">
    <citation type="journal article" date="2008" name="Proc. Natl. Acad. Sci. U.S.A.">
        <title>A quantitative atlas of mitotic phosphorylation.</title>
        <authorList>
            <person name="Dephoure N."/>
            <person name="Zhou C."/>
            <person name="Villen J."/>
            <person name="Beausoleil S.A."/>
            <person name="Bakalarski C.E."/>
            <person name="Elledge S.J."/>
            <person name="Gygi S.P."/>
        </authorList>
    </citation>
    <scope>PHOSPHORYLATION [LARGE SCALE ANALYSIS] AT SER-149</scope>
    <scope>IDENTIFICATION BY MASS SPECTROMETRY [LARGE SCALE ANALYSIS]</scope>
    <source>
        <tissue>Cervix carcinoma</tissue>
    </source>
</reference>
<reference key="9">
    <citation type="journal article" date="2010" name="Sci. Signal.">
        <title>Quantitative phosphoproteomics reveals widespread full phosphorylation site occupancy during mitosis.</title>
        <authorList>
            <person name="Olsen J.V."/>
            <person name="Vermeulen M."/>
            <person name="Santamaria A."/>
            <person name="Kumar C."/>
            <person name="Miller M.L."/>
            <person name="Jensen L.J."/>
            <person name="Gnad F."/>
            <person name="Cox J."/>
            <person name="Jensen T.S."/>
            <person name="Nigg E.A."/>
            <person name="Brunak S."/>
            <person name="Mann M."/>
        </authorList>
    </citation>
    <scope>PHOSPHORYLATION [LARGE SCALE ANALYSIS] AT SER-149</scope>
    <scope>IDENTIFICATION BY MASS SPECTROMETRY [LARGE SCALE ANALYSIS]</scope>
    <source>
        <tissue>Cervix carcinoma</tissue>
    </source>
</reference>
<reference key="10">
    <citation type="journal article" date="2011" name="BMC Syst. Biol.">
        <title>Initial characterization of the human central proteome.</title>
        <authorList>
            <person name="Burkard T.R."/>
            <person name="Planyavsky M."/>
            <person name="Kaupe I."/>
            <person name="Breitwieser F.P."/>
            <person name="Buerckstuemmer T."/>
            <person name="Bennett K.L."/>
            <person name="Superti-Furga G."/>
            <person name="Colinge J."/>
        </authorList>
    </citation>
    <scope>IDENTIFICATION BY MASS SPECTROMETRY [LARGE SCALE ANALYSIS]</scope>
</reference>
<reference key="11">
    <citation type="journal article" date="2013" name="J. Proteome Res.">
        <title>Toward a comprehensive characterization of a human cancer cell phosphoproteome.</title>
        <authorList>
            <person name="Zhou H."/>
            <person name="Di Palma S."/>
            <person name="Preisinger C."/>
            <person name="Peng M."/>
            <person name="Polat A.N."/>
            <person name="Heck A.J."/>
            <person name="Mohammed S."/>
        </authorList>
    </citation>
    <scope>PHOSPHORYLATION [LARGE SCALE ANALYSIS] AT SER-86; SER-122; SER-131; SER-149 AND SER-174</scope>
    <scope>IDENTIFICATION BY MASS SPECTROMETRY [LARGE SCALE ANALYSIS]</scope>
    <source>
        <tissue>Cervix carcinoma</tissue>
        <tissue>Erythroleukemia</tissue>
    </source>
</reference>
<reference key="12">
    <citation type="journal article" date="2014" name="J. Proteomics">
        <title>An enzyme assisted RP-RPLC approach for in-depth analysis of human liver phosphoproteome.</title>
        <authorList>
            <person name="Bian Y."/>
            <person name="Song C."/>
            <person name="Cheng K."/>
            <person name="Dong M."/>
            <person name="Wang F."/>
            <person name="Huang J."/>
            <person name="Sun D."/>
            <person name="Wang L."/>
            <person name="Ye M."/>
            <person name="Zou H."/>
        </authorList>
    </citation>
    <scope>PHOSPHORYLATION [LARGE SCALE ANALYSIS] AT SER-29 AND THR-146</scope>
    <scope>IDENTIFICATION BY MASS SPECTROMETRY [LARGE SCALE ANALYSIS]</scope>
    <source>
        <tissue>Liver</tissue>
    </source>
</reference>
<reference key="13">
    <citation type="journal article" date="2014" name="Mol. Cell. Proteomics">
        <title>Immunoaffinity enrichment and mass spectrometry analysis of protein methylation.</title>
        <authorList>
            <person name="Guo A."/>
            <person name="Gu H."/>
            <person name="Zhou J."/>
            <person name="Mulhern D."/>
            <person name="Wang Y."/>
            <person name="Lee K.A."/>
            <person name="Yang V."/>
            <person name="Aguiar M."/>
            <person name="Kornhauser J."/>
            <person name="Jia X."/>
            <person name="Ren J."/>
            <person name="Beausoleil S.A."/>
            <person name="Silva J.C."/>
            <person name="Vemulapalli V."/>
            <person name="Bedford M.T."/>
            <person name="Comb M.J."/>
        </authorList>
    </citation>
    <scope>METHYLATION [LARGE SCALE ANALYSIS] AT ARG-133</scope>
    <scope>IDENTIFICATION BY MASS SPECTROMETRY [LARGE SCALE ANALYSIS]</scope>
    <source>
        <tissue>Colon carcinoma</tissue>
    </source>
</reference>
<dbReference type="EMBL" id="U44427">
    <property type="protein sequence ID" value="AAB40894.1"/>
    <property type="molecule type" value="mRNA"/>
</dbReference>
<dbReference type="EMBL" id="U44428">
    <property type="protein sequence ID" value="AAB40895.1"/>
    <property type="molecule type" value="mRNA"/>
</dbReference>
<dbReference type="EMBL" id="AF004427">
    <property type="protein sequence ID" value="AAC98475.1"/>
    <property type="status" value="ALT_INIT"/>
    <property type="molecule type" value="mRNA"/>
</dbReference>
<dbReference type="EMBL" id="AF208012">
    <property type="protein sequence ID" value="AAG49634.1"/>
    <property type="molecule type" value="mRNA"/>
</dbReference>
<dbReference type="EMBL" id="AK291866">
    <property type="protein sequence ID" value="BAF84555.1"/>
    <property type="molecule type" value="mRNA"/>
</dbReference>
<dbReference type="EMBL" id="AK291872">
    <property type="protein sequence ID" value="BAF84561.1"/>
    <property type="molecule type" value="mRNA"/>
</dbReference>
<dbReference type="EMBL" id="AK291887">
    <property type="protein sequence ID" value="BAF84576.1"/>
    <property type="molecule type" value="mRNA"/>
</dbReference>
<dbReference type="EMBL" id="AL121938">
    <property type="status" value="NOT_ANNOTATED_CDS"/>
    <property type="molecule type" value="Genomic_DNA"/>
</dbReference>
<dbReference type="EMBL" id="AL136128">
    <property type="status" value="NOT_ANNOTATED_CDS"/>
    <property type="molecule type" value="Genomic_DNA"/>
</dbReference>
<dbReference type="EMBL" id="CH471051">
    <property type="protein sequence ID" value="EAW48142.1"/>
    <property type="molecule type" value="Genomic_DNA"/>
</dbReference>
<dbReference type="EMBL" id="BC002375">
    <property type="protein sequence ID" value="AAH02375.1"/>
    <property type="molecule type" value="mRNA"/>
</dbReference>
<dbReference type="CCDS" id="CCDS34527.1">
    <molecule id="Q16890-2"/>
</dbReference>
<dbReference type="CCDS" id="CCDS34528.1">
    <molecule id="Q16890-3"/>
</dbReference>
<dbReference type="CCDS" id="CCDS43502.1">
    <molecule id="Q16890-5"/>
</dbReference>
<dbReference type="CCDS" id="CCDS5130.1">
    <molecule id="Q16890-1"/>
</dbReference>
<dbReference type="CCDS" id="CCDS75514.1">
    <molecule id="Q16890-4"/>
</dbReference>
<dbReference type="RefSeq" id="NP_001003395.1">
    <molecule id="Q16890-5"/>
    <property type="nucleotide sequence ID" value="NM_001003395.3"/>
</dbReference>
<dbReference type="RefSeq" id="NP_001003396.1">
    <molecule id="Q16890-2"/>
    <property type="nucleotide sequence ID" value="NM_001003396.3"/>
</dbReference>
<dbReference type="RefSeq" id="NP_001003397.1">
    <molecule id="Q16890-3"/>
    <property type="nucleotide sequence ID" value="NM_001003397.3"/>
</dbReference>
<dbReference type="RefSeq" id="NP_001278955.1">
    <molecule id="Q16890-4"/>
    <property type="nucleotide sequence ID" value="NM_001292026.3"/>
</dbReference>
<dbReference type="RefSeq" id="NP_001305836.1">
    <molecule id="Q16890-4"/>
    <property type="nucleotide sequence ID" value="NM_001318907.2"/>
</dbReference>
<dbReference type="RefSeq" id="NP_003278.1">
    <molecule id="Q16890-1"/>
    <property type="nucleotide sequence ID" value="NM_003287.4"/>
</dbReference>
<dbReference type="RefSeq" id="XP_005267179.1">
    <property type="nucleotide sequence ID" value="XM_005267122.2"/>
</dbReference>
<dbReference type="RefSeq" id="XP_016866729.1">
    <property type="nucleotide sequence ID" value="XM_017011240.1"/>
</dbReference>
<dbReference type="RefSeq" id="XP_047275242.1">
    <molecule id="Q16890-5"/>
    <property type="nucleotide sequence ID" value="XM_047419286.1"/>
</dbReference>
<dbReference type="RefSeq" id="XP_054212269.1">
    <molecule id="Q16890-5"/>
    <property type="nucleotide sequence ID" value="XM_054356294.1"/>
</dbReference>
<dbReference type="RefSeq" id="XP_054212270.1">
    <molecule id="Q16890-5"/>
    <property type="nucleotide sequence ID" value="XM_054356295.1"/>
</dbReference>
<dbReference type="SMR" id="Q16890"/>
<dbReference type="BioGRID" id="113017">
    <property type="interactions" value="43"/>
</dbReference>
<dbReference type="FunCoup" id="Q16890">
    <property type="interactions" value="972"/>
</dbReference>
<dbReference type="IntAct" id="Q16890">
    <property type="interactions" value="30"/>
</dbReference>
<dbReference type="MINT" id="Q16890"/>
<dbReference type="STRING" id="9606.ENSP00000306285"/>
<dbReference type="iPTMnet" id="Q16890"/>
<dbReference type="PhosphoSitePlus" id="Q16890"/>
<dbReference type="BioMuta" id="TPD52L1"/>
<dbReference type="DMDM" id="12585368"/>
<dbReference type="jPOST" id="Q16890"/>
<dbReference type="MassIVE" id="Q16890"/>
<dbReference type="PaxDb" id="9606-ENSP00000434142"/>
<dbReference type="PeptideAtlas" id="Q16890"/>
<dbReference type="ProteomicsDB" id="28063"/>
<dbReference type="ProteomicsDB" id="61125">
    <molecule id="Q16890-1"/>
</dbReference>
<dbReference type="ProteomicsDB" id="61126">
    <molecule id="Q16890-2"/>
</dbReference>
<dbReference type="ProteomicsDB" id="61127">
    <molecule id="Q16890-3"/>
</dbReference>
<dbReference type="ProteomicsDB" id="61128">
    <molecule id="Q16890-4"/>
</dbReference>
<dbReference type="Pumba" id="Q16890"/>
<dbReference type="TopDownProteomics" id="Q16890-3">
    <molecule id="Q16890-3"/>
</dbReference>
<dbReference type="Antibodypedia" id="32681">
    <property type="antibodies" value="247 antibodies from 34 providers"/>
</dbReference>
<dbReference type="DNASU" id="7164"/>
<dbReference type="Ensembl" id="ENST00000368388.6">
    <molecule id="Q16890-3"/>
    <property type="protein sequence ID" value="ENSP00000357373.2"/>
    <property type="gene ID" value="ENSG00000111907.21"/>
</dbReference>
<dbReference type="Ensembl" id="ENST00000368402.9">
    <molecule id="Q16890-2"/>
    <property type="protein sequence ID" value="ENSP00000357387.5"/>
    <property type="gene ID" value="ENSG00000111907.21"/>
</dbReference>
<dbReference type="Ensembl" id="ENST00000392482.6">
    <molecule id="Q16890-4"/>
    <property type="protein sequence ID" value="ENSP00000376273.2"/>
    <property type="gene ID" value="ENSG00000111907.21"/>
</dbReference>
<dbReference type="Ensembl" id="ENST00000524679.1">
    <molecule id="Q16890-4"/>
    <property type="protein sequence ID" value="ENSP00000432787.1"/>
    <property type="gene ID" value="ENSG00000111907.21"/>
</dbReference>
<dbReference type="Ensembl" id="ENST00000532429.5">
    <molecule id="Q16890-5"/>
    <property type="protein sequence ID" value="ENSP00000435447.1"/>
    <property type="gene ID" value="ENSG00000111907.21"/>
</dbReference>
<dbReference type="Ensembl" id="ENST00000534000.6">
    <molecule id="Q16890-1"/>
    <property type="protein sequence ID" value="ENSP00000434142.1"/>
    <property type="gene ID" value="ENSG00000111907.21"/>
</dbReference>
<dbReference type="Ensembl" id="ENST00000534199.5">
    <molecule id="Q16890-4"/>
    <property type="protein sequence ID" value="ENSP00000432590.1"/>
    <property type="gene ID" value="ENSG00000111907.21"/>
</dbReference>
<dbReference type="GeneID" id="7164"/>
<dbReference type="KEGG" id="hsa:7164"/>
<dbReference type="MANE-Select" id="ENST00000534000.6">
    <property type="protein sequence ID" value="ENSP00000434142.1"/>
    <property type="RefSeq nucleotide sequence ID" value="NM_003287.4"/>
    <property type="RefSeq protein sequence ID" value="NP_003278.1"/>
</dbReference>
<dbReference type="UCSC" id="uc003pzu.2">
    <molecule id="Q16890-1"/>
    <property type="organism name" value="human"/>
</dbReference>
<dbReference type="AGR" id="HGNC:12006"/>
<dbReference type="CTD" id="7164"/>
<dbReference type="DisGeNET" id="7164"/>
<dbReference type="GeneCards" id="TPD52L1"/>
<dbReference type="HGNC" id="HGNC:12006">
    <property type="gene designation" value="TPD52L1"/>
</dbReference>
<dbReference type="HPA" id="ENSG00000111907">
    <property type="expression patterns" value="Tissue enhanced (salivary)"/>
</dbReference>
<dbReference type="MIM" id="604069">
    <property type="type" value="gene"/>
</dbReference>
<dbReference type="neXtProt" id="NX_Q16890"/>
<dbReference type="OpenTargets" id="ENSG00000111907"/>
<dbReference type="PharmGKB" id="PA36687"/>
<dbReference type="VEuPathDB" id="HostDB:ENSG00000111907"/>
<dbReference type="eggNOG" id="KOG4010">
    <property type="taxonomic scope" value="Eukaryota"/>
</dbReference>
<dbReference type="GeneTree" id="ENSGT00940000159202"/>
<dbReference type="HOGENOM" id="CLU_080743_0_0_1"/>
<dbReference type="InParanoid" id="Q16890"/>
<dbReference type="OrthoDB" id="10000687at2759"/>
<dbReference type="PAN-GO" id="Q16890">
    <property type="GO annotations" value="3 GO annotations based on evolutionary models"/>
</dbReference>
<dbReference type="PhylomeDB" id="Q16890"/>
<dbReference type="TreeFam" id="TF317562"/>
<dbReference type="PathwayCommons" id="Q16890"/>
<dbReference type="Reactome" id="R-HSA-432722">
    <property type="pathway name" value="Golgi Associated Vesicle Biogenesis"/>
</dbReference>
<dbReference type="SignaLink" id="Q16890"/>
<dbReference type="BioGRID-ORCS" id="7164">
    <property type="hits" value="11 hits in 1164 CRISPR screens"/>
</dbReference>
<dbReference type="ChiTaRS" id="TPD52L1">
    <property type="organism name" value="human"/>
</dbReference>
<dbReference type="GeneWiki" id="TPD52L1"/>
<dbReference type="GenomeRNAi" id="7164"/>
<dbReference type="Pharos" id="Q16890">
    <property type="development level" value="Tbio"/>
</dbReference>
<dbReference type="PRO" id="PR:Q16890"/>
<dbReference type="Proteomes" id="UP000005640">
    <property type="component" value="Chromosome 6"/>
</dbReference>
<dbReference type="RNAct" id="Q16890">
    <property type="molecule type" value="protein"/>
</dbReference>
<dbReference type="Bgee" id="ENSG00000111907">
    <property type="expression patterns" value="Expressed in parotid gland and 195 other cell types or tissues"/>
</dbReference>
<dbReference type="ExpressionAtlas" id="Q16890">
    <property type="expression patterns" value="baseline and differential"/>
</dbReference>
<dbReference type="GO" id="GO:0005737">
    <property type="term" value="C:cytoplasm"/>
    <property type="evidence" value="ECO:0000314"/>
    <property type="project" value="UniProtKB"/>
</dbReference>
<dbReference type="GO" id="GO:0048471">
    <property type="term" value="C:perinuclear region of cytoplasm"/>
    <property type="evidence" value="ECO:0000314"/>
    <property type="project" value="UniProtKB"/>
</dbReference>
<dbReference type="GO" id="GO:0042802">
    <property type="term" value="F:identical protein binding"/>
    <property type="evidence" value="ECO:0000353"/>
    <property type="project" value="IntAct"/>
</dbReference>
<dbReference type="GO" id="GO:0042803">
    <property type="term" value="F:protein homodimerization activity"/>
    <property type="evidence" value="ECO:0000314"/>
    <property type="project" value="UniProtKB"/>
</dbReference>
<dbReference type="GO" id="GO:0000086">
    <property type="term" value="P:G2/M transition of mitotic cell cycle"/>
    <property type="evidence" value="ECO:0000314"/>
    <property type="project" value="UniProtKB"/>
</dbReference>
<dbReference type="GO" id="GO:2001235">
    <property type="term" value="P:positive regulation of apoptotic signaling pathway"/>
    <property type="evidence" value="ECO:0000314"/>
    <property type="project" value="UniProtKB"/>
</dbReference>
<dbReference type="GO" id="GO:0046330">
    <property type="term" value="P:positive regulation of JNK cascade"/>
    <property type="evidence" value="ECO:0000314"/>
    <property type="project" value="UniProtKB"/>
</dbReference>
<dbReference type="GO" id="GO:0043406">
    <property type="term" value="P:positive regulation of MAP kinase activity"/>
    <property type="evidence" value="ECO:0000314"/>
    <property type="project" value="UniProtKB"/>
</dbReference>
<dbReference type="InterPro" id="IPR007327">
    <property type="entry name" value="TPD52"/>
</dbReference>
<dbReference type="PANTHER" id="PTHR19307">
    <property type="entry name" value="TUMOR PROTEIN D52"/>
    <property type="match status" value="1"/>
</dbReference>
<dbReference type="PANTHER" id="PTHR19307:SF8">
    <property type="entry name" value="TUMOR PROTEIN D53"/>
    <property type="match status" value="1"/>
</dbReference>
<dbReference type="Pfam" id="PF04201">
    <property type="entry name" value="TPD52"/>
    <property type="match status" value="1"/>
</dbReference>
<evidence type="ECO:0000255" key="1"/>
<evidence type="ECO:0000256" key="2">
    <source>
        <dbReference type="SAM" id="MobiDB-lite"/>
    </source>
</evidence>
<evidence type="ECO:0000303" key="3">
    <source>
    </source>
</evidence>
<evidence type="ECO:0000303" key="4">
    <source>
    </source>
</evidence>
<evidence type="ECO:0000303" key="5">
    <source>
    </source>
</evidence>
<evidence type="ECO:0000303" key="6">
    <source ref="3"/>
</evidence>
<evidence type="ECO:0000305" key="7"/>
<evidence type="ECO:0007744" key="8">
    <source>
    </source>
</evidence>
<evidence type="ECO:0007744" key="9">
    <source>
    </source>
</evidence>
<evidence type="ECO:0007744" key="10">
    <source>
    </source>
</evidence>
<evidence type="ECO:0007744" key="11">
    <source>
    </source>
</evidence>
<evidence type="ECO:0007744" key="12">
    <source>
    </source>
</evidence>
<protein>
    <recommendedName>
        <fullName>Tumor protein D53</fullName>
        <shortName>hD53</shortName>
    </recommendedName>
    <alternativeName>
        <fullName>Tumor protein D52-like 1</fullName>
    </alternativeName>
</protein>
<gene>
    <name type="primary">TPD52L1</name>
</gene>
<comment type="subunit">
    <text>Forms a homodimer or heterodimer with other members of the family.</text>
</comment>
<comment type="interaction">
    <interactant intactId="EBI-717470">
        <id>Q16890</id>
    </interactant>
    <interactant intactId="EBI-782581">
        <id>P55327</id>
        <label>TPD52</label>
    </interactant>
    <organismsDiffer>false</organismsDiffer>
    <experiments>6</experiments>
</comment>
<comment type="interaction">
    <interactant intactId="EBI-717470">
        <id>Q16890</id>
    </interactant>
    <interactant intactId="EBI-717470">
        <id>Q16890</id>
        <label>TPD52L1</label>
    </interactant>
    <organismsDiffer>false</organismsDiffer>
    <experiments>4</experiments>
</comment>
<comment type="interaction">
    <interactant intactId="EBI-717470">
        <id>Q16890</id>
    </interactant>
    <interactant intactId="EBI-932162">
        <id>Q96J77</id>
        <label>TPD52L3</label>
    </interactant>
    <organismsDiffer>false</organismsDiffer>
    <experiments>3</experiments>
</comment>
<comment type="interaction">
    <interactant intactId="EBI-717470">
        <id>Q16890</id>
    </interactant>
    <interactant intactId="EBI-782591">
        <id>Q62393</id>
        <label>Tpd52</label>
    </interactant>
    <organismsDiffer>true</organismsDiffer>
    <experiments>3</experiments>
</comment>
<comment type="interaction">
    <interactant intactId="EBI-18777952">
        <id>Q16890-2</id>
    </interactant>
    <interactant intactId="EBI-741171">
        <id>Q96AL5</id>
        <label>PBX3</label>
    </interactant>
    <organismsDiffer>false</organismsDiffer>
    <experiments>3</experiments>
</comment>
<comment type="interaction">
    <interactant intactId="EBI-18777952">
        <id>Q16890-2</id>
    </interactant>
    <interactant intactId="EBI-12124194">
        <id>P55327-2</id>
        <label>TPD52</label>
    </interactant>
    <organismsDiffer>false</organismsDiffer>
    <experiments>3</experiments>
</comment>
<comment type="alternative products">
    <event type="alternative splicing"/>
    <isoform>
        <id>Q16890-1</id>
        <name>1</name>
        <sequence type="displayed"/>
    </isoform>
    <isoform>
        <id>Q16890-2</id>
        <name>2</name>
        <sequence type="described" ref="VSP_036754 VSP_036755"/>
    </isoform>
    <isoform>
        <id>Q16890-3</id>
        <name>3</name>
        <sequence type="described" ref="VSP_036752 VSP_036753"/>
    </isoform>
    <isoform>
        <id>Q16890-4</id>
        <name>4</name>
        <name>+5hD53</name>
        <sequence type="described" ref="VSP_036751 VSP_036752 VSP_036753"/>
    </isoform>
    <isoform>
        <id>Q16890-5</id>
        <name>5</name>
        <sequence type="described" ref="VSP_036751"/>
    </isoform>
</comment>
<comment type="similarity">
    <text evidence="7">Belongs to the TPD52 family.</text>
</comment>
<comment type="sequence caution" evidence="7">
    <conflict type="erroneous initiation">
        <sequence resource="EMBL-CDS" id="AAC98475"/>
    </conflict>
    <text>Extended N-terminus.</text>
</comment>
<name>TPD53_HUMAN</name>
<sequence>MEAQAQGLLETEPLQGTDEDAVASADFSSMLSEEEKEELKAELVQLEDEITTLRQVLSAKERHLVEIKQKLGMNLMNELKQNFSKSWHDMQTTTAYKKTHETLSHAGQKATAAFSNVGTAISKKFGDMSYSIRHSISMPAMRNSPTFKSFEERVETTVTSLKTKVGGTNPNGGSFEEVLSSTAHASAQSLAGGSRRTKEEELQC</sequence>
<organism>
    <name type="scientific">Homo sapiens</name>
    <name type="common">Human</name>
    <dbReference type="NCBI Taxonomy" id="9606"/>
    <lineage>
        <taxon>Eukaryota</taxon>
        <taxon>Metazoa</taxon>
        <taxon>Chordata</taxon>
        <taxon>Craniata</taxon>
        <taxon>Vertebrata</taxon>
        <taxon>Euteleostomi</taxon>
        <taxon>Mammalia</taxon>
        <taxon>Eutheria</taxon>
        <taxon>Euarchontoglires</taxon>
        <taxon>Primates</taxon>
        <taxon>Haplorrhini</taxon>
        <taxon>Catarrhini</taxon>
        <taxon>Hominidae</taxon>
        <taxon>Homo</taxon>
    </lineage>
</organism>